<organism>
    <name type="scientific">Bacillus anthracis (strain CDC 684 / NRRL 3495)</name>
    <dbReference type="NCBI Taxonomy" id="568206"/>
    <lineage>
        <taxon>Bacteria</taxon>
        <taxon>Bacillati</taxon>
        <taxon>Bacillota</taxon>
        <taxon>Bacilli</taxon>
        <taxon>Bacillales</taxon>
        <taxon>Bacillaceae</taxon>
        <taxon>Bacillus</taxon>
        <taxon>Bacillus cereus group</taxon>
    </lineage>
</organism>
<proteinExistence type="inferred from homology"/>
<gene>
    <name evidence="1" type="primary">rpmE2</name>
    <name type="ordered locus">BAMEG_5620</name>
</gene>
<feature type="chain" id="PRO_1000176981" description="Large ribosomal subunit protein bL31B">
    <location>
        <begin position="1"/>
        <end position="81"/>
    </location>
</feature>
<accession>C3LFK5</accession>
<keyword id="KW-0687">Ribonucleoprotein</keyword>
<keyword id="KW-0689">Ribosomal protein</keyword>
<protein>
    <recommendedName>
        <fullName evidence="1">Large ribosomal subunit protein bL31B</fullName>
    </recommendedName>
    <alternativeName>
        <fullName evidence="2">50S ribosomal protein L31 type B</fullName>
    </alternativeName>
</protein>
<evidence type="ECO:0000255" key="1">
    <source>
        <dbReference type="HAMAP-Rule" id="MF_00502"/>
    </source>
</evidence>
<evidence type="ECO:0000305" key="2"/>
<dbReference type="EMBL" id="CP001215">
    <property type="protein sequence ID" value="ACP17308.1"/>
    <property type="molecule type" value="Genomic_DNA"/>
</dbReference>
<dbReference type="RefSeq" id="WP_000643433.1">
    <property type="nucleotide sequence ID" value="NC_012581.1"/>
</dbReference>
<dbReference type="SMR" id="C3LFK5"/>
<dbReference type="KEGG" id="bah:BAMEG_5620"/>
<dbReference type="HOGENOM" id="CLU_114306_2_2_9"/>
<dbReference type="GO" id="GO:1990904">
    <property type="term" value="C:ribonucleoprotein complex"/>
    <property type="evidence" value="ECO:0007669"/>
    <property type="project" value="UniProtKB-KW"/>
</dbReference>
<dbReference type="GO" id="GO:0005840">
    <property type="term" value="C:ribosome"/>
    <property type="evidence" value="ECO:0007669"/>
    <property type="project" value="UniProtKB-KW"/>
</dbReference>
<dbReference type="GO" id="GO:0003735">
    <property type="term" value="F:structural constituent of ribosome"/>
    <property type="evidence" value="ECO:0007669"/>
    <property type="project" value="InterPro"/>
</dbReference>
<dbReference type="GO" id="GO:0006412">
    <property type="term" value="P:translation"/>
    <property type="evidence" value="ECO:0007669"/>
    <property type="project" value="UniProtKB-UniRule"/>
</dbReference>
<dbReference type="Gene3D" id="4.10.830.30">
    <property type="entry name" value="Ribosomal protein L31"/>
    <property type="match status" value="1"/>
</dbReference>
<dbReference type="HAMAP" id="MF_00502">
    <property type="entry name" value="Ribosomal_bL31_2"/>
    <property type="match status" value="1"/>
</dbReference>
<dbReference type="InterPro" id="IPR034704">
    <property type="entry name" value="Ribosomal_bL28/bL31-like_sf"/>
</dbReference>
<dbReference type="InterPro" id="IPR002150">
    <property type="entry name" value="Ribosomal_bL31"/>
</dbReference>
<dbReference type="InterPro" id="IPR027493">
    <property type="entry name" value="Ribosomal_bL31_B"/>
</dbReference>
<dbReference type="InterPro" id="IPR042105">
    <property type="entry name" value="Ribosomal_bL31_sf"/>
</dbReference>
<dbReference type="NCBIfam" id="TIGR00105">
    <property type="entry name" value="L31"/>
    <property type="match status" value="1"/>
</dbReference>
<dbReference type="NCBIfam" id="NF002462">
    <property type="entry name" value="PRK01678.1"/>
    <property type="match status" value="1"/>
</dbReference>
<dbReference type="PANTHER" id="PTHR33280">
    <property type="entry name" value="50S RIBOSOMAL PROTEIN L31, CHLOROPLASTIC"/>
    <property type="match status" value="1"/>
</dbReference>
<dbReference type="PANTHER" id="PTHR33280:SF1">
    <property type="entry name" value="LARGE RIBOSOMAL SUBUNIT PROTEIN BL31C"/>
    <property type="match status" value="1"/>
</dbReference>
<dbReference type="Pfam" id="PF01197">
    <property type="entry name" value="Ribosomal_L31"/>
    <property type="match status" value="1"/>
</dbReference>
<dbReference type="PRINTS" id="PR01249">
    <property type="entry name" value="RIBOSOMALL31"/>
</dbReference>
<dbReference type="SUPFAM" id="SSF143800">
    <property type="entry name" value="L28p-like"/>
    <property type="match status" value="1"/>
</dbReference>
<dbReference type="PROSITE" id="PS01143">
    <property type="entry name" value="RIBOSOMAL_L31"/>
    <property type="match status" value="1"/>
</dbReference>
<reference key="1">
    <citation type="submission" date="2008-10" db="EMBL/GenBank/DDBJ databases">
        <title>Genome sequence of Bacillus anthracis str. CDC 684.</title>
        <authorList>
            <person name="Dodson R.J."/>
            <person name="Munk A.C."/>
            <person name="Brettin T."/>
            <person name="Bruce D."/>
            <person name="Detter C."/>
            <person name="Tapia R."/>
            <person name="Han C."/>
            <person name="Sutton G."/>
            <person name="Sims D."/>
        </authorList>
    </citation>
    <scope>NUCLEOTIDE SEQUENCE [LARGE SCALE GENOMIC DNA]</scope>
    <source>
        <strain>CDC 684 / NRRL 3495</strain>
    </source>
</reference>
<name>RL31B_BACAC</name>
<sequence>MKAGIHPDYKKVVFMDTNTGFKFLSGSTKGSNETVEWEDGNTYPLLKVEISSDSHPFYTGRQKFATADGRVDRFNKKYGLK</sequence>
<comment type="subunit">
    <text evidence="1">Part of the 50S ribosomal subunit.</text>
</comment>
<comment type="similarity">
    <text evidence="1">Belongs to the bacterial ribosomal protein bL31 family. Type B subfamily.</text>
</comment>